<comment type="function">
    <text evidence="1">ATP-binding RNA helicase involved in ribosome assembly.</text>
</comment>
<comment type="catalytic activity">
    <reaction>
        <text>ATP + H2O = ADP + phosphate + H(+)</text>
        <dbReference type="Rhea" id="RHEA:13065"/>
        <dbReference type="ChEBI" id="CHEBI:15377"/>
        <dbReference type="ChEBI" id="CHEBI:15378"/>
        <dbReference type="ChEBI" id="CHEBI:30616"/>
        <dbReference type="ChEBI" id="CHEBI:43474"/>
        <dbReference type="ChEBI" id="CHEBI:456216"/>
        <dbReference type="EC" id="3.6.4.13"/>
    </reaction>
</comment>
<comment type="subunit">
    <text evidence="1">Associates with pre-ribosomal particles.</text>
</comment>
<comment type="subcellular location">
    <subcellularLocation>
        <location evidence="1">Nucleus</location>
        <location evidence="1">Nucleolus</location>
    </subcellularLocation>
</comment>
<comment type="domain">
    <text>The Q motif is unique to and characteristic of the DEAD box family of RNA helicases and controls ATP binding and hydrolysis.</text>
</comment>
<comment type="similarity">
    <text evidence="6">Belongs to the DEAD box helicase family. DDX27/DRS1 subfamily.</text>
</comment>
<feature type="chain" id="PRO_0000227955" description="ATP-dependent RNA helicase DRS1">
    <location>
        <begin position="1"/>
        <end position="734"/>
    </location>
</feature>
<feature type="domain" description="Helicase ATP-binding" evidence="3">
    <location>
        <begin position="250"/>
        <end position="425"/>
    </location>
</feature>
<feature type="domain" description="Helicase C-terminal" evidence="4">
    <location>
        <begin position="436"/>
        <end position="599"/>
    </location>
</feature>
<feature type="region of interest" description="Disordered" evidence="5">
    <location>
        <begin position="1"/>
        <end position="61"/>
    </location>
</feature>
<feature type="region of interest" description="Disordered" evidence="5">
    <location>
        <begin position="116"/>
        <end position="194"/>
    </location>
</feature>
<feature type="region of interest" description="Disordered" evidence="5">
    <location>
        <begin position="660"/>
        <end position="734"/>
    </location>
</feature>
<feature type="coiled-coil region" evidence="2">
    <location>
        <begin position="619"/>
        <end position="697"/>
    </location>
</feature>
<feature type="short sequence motif" description="Q motif">
    <location>
        <begin position="219"/>
        <end position="247"/>
    </location>
</feature>
<feature type="short sequence motif" description="DEAD box">
    <location>
        <begin position="373"/>
        <end position="376"/>
    </location>
</feature>
<feature type="compositionally biased region" description="Acidic residues" evidence="5">
    <location>
        <begin position="18"/>
        <end position="34"/>
    </location>
</feature>
<feature type="compositionally biased region" description="Basic residues" evidence="5">
    <location>
        <begin position="39"/>
        <end position="50"/>
    </location>
</feature>
<feature type="compositionally biased region" description="Acidic residues" evidence="5">
    <location>
        <begin position="118"/>
        <end position="140"/>
    </location>
</feature>
<feature type="compositionally biased region" description="Low complexity" evidence="5">
    <location>
        <begin position="148"/>
        <end position="158"/>
    </location>
</feature>
<feature type="compositionally biased region" description="Acidic residues" evidence="5">
    <location>
        <begin position="171"/>
        <end position="194"/>
    </location>
</feature>
<feature type="compositionally biased region" description="Basic residues" evidence="5">
    <location>
        <begin position="680"/>
        <end position="691"/>
    </location>
</feature>
<feature type="compositionally biased region" description="Basic residues" evidence="5">
    <location>
        <begin position="720"/>
        <end position="734"/>
    </location>
</feature>
<feature type="binding site" evidence="3">
    <location>
        <begin position="263"/>
        <end position="270"/>
    </location>
    <ligand>
        <name>ATP</name>
        <dbReference type="ChEBI" id="CHEBI:30616"/>
    </ligand>
</feature>
<evidence type="ECO:0000250" key="1"/>
<evidence type="ECO:0000255" key="2"/>
<evidence type="ECO:0000255" key="3">
    <source>
        <dbReference type="PROSITE-ProRule" id="PRU00541"/>
    </source>
</evidence>
<evidence type="ECO:0000255" key="4">
    <source>
        <dbReference type="PROSITE-ProRule" id="PRU00542"/>
    </source>
</evidence>
<evidence type="ECO:0000256" key="5">
    <source>
        <dbReference type="SAM" id="MobiDB-lite"/>
    </source>
</evidence>
<evidence type="ECO:0000305" key="6"/>
<name>DRS1_EREGS</name>
<proteinExistence type="inferred from homology"/>
<organism>
    <name type="scientific">Eremothecium gossypii (strain ATCC 10895 / CBS 109.51 / FGSC 9923 / NRRL Y-1056)</name>
    <name type="common">Yeast</name>
    <name type="synonym">Ashbya gossypii</name>
    <dbReference type="NCBI Taxonomy" id="284811"/>
    <lineage>
        <taxon>Eukaryota</taxon>
        <taxon>Fungi</taxon>
        <taxon>Dikarya</taxon>
        <taxon>Ascomycota</taxon>
        <taxon>Saccharomycotina</taxon>
        <taxon>Saccharomycetes</taxon>
        <taxon>Saccharomycetales</taxon>
        <taxon>Saccharomycetaceae</taxon>
        <taxon>Eremothecium</taxon>
    </lineage>
</organism>
<accession>Q75F95</accession>
<gene>
    <name type="primary">DRS1</name>
    <name type="ordered locus">AAL164C</name>
</gene>
<protein>
    <recommendedName>
        <fullName>ATP-dependent RNA helicase DRS1</fullName>
        <ecNumber>3.6.4.13</ecNumber>
    </recommendedName>
</protein>
<dbReference type="EC" id="3.6.4.13"/>
<dbReference type="EMBL" id="AE016814">
    <property type="protein sequence ID" value="AAS50202.1"/>
    <property type="molecule type" value="Genomic_DNA"/>
</dbReference>
<dbReference type="RefSeq" id="NP_982378.1">
    <property type="nucleotide sequence ID" value="NM_207731.1"/>
</dbReference>
<dbReference type="SMR" id="Q75F95"/>
<dbReference type="FunCoup" id="Q75F95">
    <property type="interactions" value="972"/>
</dbReference>
<dbReference type="STRING" id="284811.Q75F95"/>
<dbReference type="EnsemblFungi" id="AAS50202">
    <property type="protein sequence ID" value="AAS50202"/>
    <property type="gene ID" value="AGOS_AAL164C"/>
</dbReference>
<dbReference type="GeneID" id="4618422"/>
<dbReference type="KEGG" id="ago:AGOS_AAL164C"/>
<dbReference type="eggNOG" id="KOG0338">
    <property type="taxonomic scope" value="Eukaryota"/>
</dbReference>
<dbReference type="HOGENOM" id="CLU_003041_3_2_1"/>
<dbReference type="InParanoid" id="Q75F95"/>
<dbReference type="OMA" id="MIDPPKQ"/>
<dbReference type="OrthoDB" id="10259843at2759"/>
<dbReference type="Proteomes" id="UP000000591">
    <property type="component" value="Chromosome I"/>
</dbReference>
<dbReference type="GO" id="GO:0005730">
    <property type="term" value="C:nucleolus"/>
    <property type="evidence" value="ECO:0000318"/>
    <property type="project" value="GO_Central"/>
</dbReference>
<dbReference type="GO" id="GO:0030687">
    <property type="term" value="C:preribosome, large subunit precursor"/>
    <property type="evidence" value="ECO:0007669"/>
    <property type="project" value="EnsemblFungi"/>
</dbReference>
<dbReference type="GO" id="GO:0005524">
    <property type="term" value="F:ATP binding"/>
    <property type="evidence" value="ECO:0007669"/>
    <property type="project" value="UniProtKB-KW"/>
</dbReference>
<dbReference type="GO" id="GO:0016887">
    <property type="term" value="F:ATP hydrolysis activity"/>
    <property type="evidence" value="ECO:0007669"/>
    <property type="project" value="RHEA"/>
</dbReference>
<dbReference type="GO" id="GO:0003723">
    <property type="term" value="F:RNA binding"/>
    <property type="evidence" value="ECO:0007669"/>
    <property type="project" value="UniProtKB-KW"/>
</dbReference>
<dbReference type="GO" id="GO:0003724">
    <property type="term" value="F:RNA helicase activity"/>
    <property type="evidence" value="ECO:0007669"/>
    <property type="project" value="UniProtKB-EC"/>
</dbReference>
<dbReference type="GO" id="GO:0000027">
    <property type="term" value="P:ribosomal large subunit assembly"/>
    <property type="evidence" value="ECO:0007669"/>
    <property type="project" value="EnsemblFungi"/>
</dbReference>
<dbReference type="GO" id="GO:0006364">
    <property type="term" value="P:rRNA processing"/>
    <property type="evidence" value="ECO:0007669"/>
    <property type="project" value="EnsemblFungi"/>
</dbReference>
<dbReference type="CDD" id="cd17947">
    <property type="entry name" value="DEADc_DDX27"/>
    <property type="match status" value="1"/>
</dbReference>
<dbReference type="CDD" id="cd18787">
    <property type="entry name" value="SF2_C_DEAD"/>
    <property type="match status" value="1"/>
</dbReference>
<dbReference type="FunFam" id="3.40.50.300:FF:000842">
    <property type="entry name" value="ATP-dependent RNA helicase DRS1"/>
    <property type="match status" value="1"/>
</dbReference>
<dbReference type="Gene3D" id="3.40.50.300">
    <property type="entry name" value="P-loop containing nucleotide triphosphate hydrolases"/>
    <property type="match status" value="2"/>
</dbReference>
<dbReference type="InterPro" id="IPR011545">
    <property type="entry name" value="DEAD/DEAH_box_helicase_dom"/>
</dbReference>
<dbReference type="InterPro" id="IPR050079">
    <property type="entry name" value="DEAD_box_RNA_helicase"/>
</dbReference>
<dbReference type="InterPro" id="IPR014001">
    <property type="entry name" value="Helicase_ATP-bd"/>
</dbReference>
<dbReference type="InterPro" id="IPR001650">
    <property type="entry name" value="Helicase_C-like"/>
</dbReference>
<dbReference type="InterPro" id="IPR027417">
    <property type="entry name" value="P-loop_NTPase"/>
</dbReference>
<dbReference type="InterPro" id="IPR000629">
    <property type="entry name" value="RNA-helicase_DEAD-box_CS"/>
</dbReference>
<dbReference type="InterPro" id="IPR014014">
    <property type="entry name" value="RNA_helicase_DEAD_Q_motif"/>
</dbReference>
<dbReference type="PANTHER" id="PTHR47959:SF1">
    <property type="entry name" value="ATP-DEPENDENT RNA HELICASE DBPA"/>
    <property type="match status" value="1"/>
</dbReference>
<dbReference type="PANTHER" id="PTHR47959">
    <property type="entry name" value="ATP-DEPENDENT RNA HELICASE RHLE-RELATED"/>
    <property type="match status" value="1"/>
</dbReference>
<dbReference type="Pfam" id="PF00270">
    <property type="entry name" value="DEAD"/>
    <property type="match status" value="1"/>
</dbReference>
<dbReference type="Pfam" id="PF00271">
    <property type="entry name" value="Helicase_C"/>
    <property type="match status" value="1"/>
</dbReference>
<dbReference type="SMART" id="SM00487">
    <property type="entry name" value="DEXDc"/>
    <property type="match status" value="1"/>
</dbReference>
<dbReference type="SMART" id="SM00490">
    <property type="entry name" value="HELICc"/>
    <property type="match status" value="1"/>
</dbReference>
<dbReference type="SUPFAM" id="SSF52540">
    <property type="entry name" value="P-loop containing nucleoside triphosphate hydrolases"/>
    <property type="match status" value="1"/>
</dbReference>
<dbReference type="PROSITE" id="PS00039">
    <property type="entry name" value="DEAD_ATP_HELICASE"/>
    <property type="match status" value="1"/>
</dbReference>
<dbReference type="PROSITE" id="PS51192">
    <property type="entry name" value="HELICASE_ATP_BIND_1"/>
    <property type="match status" value="1"/>
</dbReference>
<dbReference type="PROSITE" id="PS51194">
    <property type="entry name" value="HELICASE_CTER"/>
    <property type="match status" value="1"/>
</dbReference>
<dbReference type="PROSITE" id="PS51195">
    <property type="entry name" value="Q_MOTIF"/>
    <property type="match status" value="1"/>
</dbReference>
<sequence length="734" mass="81244">MGTKKVNQFKDFVPTISDSEEDIPDLDASDDEYETAGKVKSRKKTKKGRKGGAVIADDEDAHADLNPEFHFNDEGAEGTTDFSGWDFVGDGERAEQKDVDLDGIIRRKGGLVQLAGVEESEEEVEEAESAAGASDDEELALDGFGMGAVAQREAAGAADESDSESDKDSDNSAEEAVELDGVEFGDEQEEAREEDTAEEMAQFYAPSNEGEEAKNVVHSTFNSLSLSRPVLKGLAALGYTKPSPIQGATIPIALLGKDVIAGAVTGSGKTAAFMIPIIERLLYKPAKIASTRVLVLTPTRELAIQVADVGKKLGKFVSGLTFGLAVGGLNLRQQEQALKLRPDIVIATPGRIIDHIRNSASFSVDSVEVLVIDEADRMLEDGFQDELNEIMSLIPSKRQTLLFSATMNSRIKQLISLSLKKPVRIMIDPPKQAANKLTQEFVRLRKREHLKPALLYHLLRKLDSTGQKRIVVFVARKEVAHRLRVILGLLGMKAGELHGSLTQEQRLQSVNNFKSLDVPVLVCTDLASRGLDIPKIEVVINYDMPKTYEIYLHRVGRTARAGREGKSVTLVGESTQERSIVKDAIKSVDGSKGSGRACGRVVDWKQVEEIHKLVQAKEDVIGEILEEEKQEKEILRAEMEIRKGENMLKFKEEINARPRRTWFQSESEKKNSSILQALSKNKKVTNSKKRKREEAQQEVGSRQYKKTQKDRTTNQELAFRKQKKGGNKKKKVRK</sequence>
<keyword id="KW-0067">ATP-binding</keyword>
<keyword id="KW-0175">Coiled coil</keyword>
<keyword id="KW-0347">Helicase</keyword>
<keyword id="KW-0378">Hydrolase</keyword>
<keyword id="KW-0547">Nucleotide-binding</keyword>
<keyword id="KW-0539">Nucleus</keyword>
<keyword id="KW-1185">Reference proteome</keyword>
<keyword id="KW-0690">Ribosome biogenesis</keyword>
<keyword id="KW-0694">RNA-binding</keyword>
<reference key="1">
    <citation type="journal article" date="2004" name="Science">
        <title>The Ashbya gossypii genome as a tool for mapping the ancient Saccharomyces cerevisiae genome.</title>
        <authorList>
            <person name="Dietrich F.S."/>
            <person name="Voegeli S."/>
            <person name="Brachat S."/>
            <person name="Lerch A."/>
            <person name="Gates K."/>
            <person name="Steiner S."/>
            <person name="Mohr C."/>
            <person name="Poehlmann R."/>
            <person name="Luedi P."/>
            <person name="Choi S."/>
            <person name="Wing R.A."/>
            <person name="Flavier A."/>
            <person name="Gaffney T.D."/>
            <person name="Philippsen P."/>
        </authorList>
    </citation>
    <scope>NUCLEOTIDE SEQUENCE [LARGE SCALE GENOMIC DNA]</scope>
    <source>
        <strain>ATCC 10895 / CBS 109.51 / FGSC 9923 / NRRL Y-1056</strain>
    </source>
</reference>
<reference key="2">
    <citation type="journal article" date="2013" name="G3 (Bethesda)">
        <title>Genomes of Ashbya fungi isolated from insects reveal four mating-type loci, numerous translocations, lack of transposons, and distinct gene duplications.</title>
        <authorList>
            <person name="Dietrich F.S."/>
            <person name="Voegeli S."/>
            <person name="Kuo S."/>
            <person name="Philippsen P."/>
        </authorList>
    </citation>
    <scope>GENOME REANNOTATION</scope>
    <source>
        <strain>ATCC 10895 / CBS 109.51 / FGSC 9923 / NRRL Y-1056</strain>
    </source>
</reference>